<proteinExistence type="inferred from homology"/>
<accession>Q3IEB7</accession>
<feature type="chain" id="PRO_1000146879" description="Glutamate--cysteine ligase">
    <location>
        <begin position="1"/>
        <end position="525"/>
    </location>
</feature>
<name>GSH1_PSET1</name>
<sequence length="525" mass="59188">MATHDLTNALDALSVTQHKHAINGIKRGIERESLRIKSDGVISAQKHPEGVGSALTNGQITTDFSESLLEFITPVSESSTQTLQQLKDLQKFTLEKMGDELLWPISMPCFIEHQDDIVIAQFGSSNVGQMKTLYREGLKNRYGSMMQAIAGVHFNISFPDSLWQSLHTLKNSDLSLEDFISDGYLALIRNFKRELWLISYLFGASPALCSSFLQGRKTDLPFKKLGKGTLYLEVGTALRLGNLGYTNSAQSSLRVMYNSLDEYVAGLKKSINTPSDIYGNLDDYTSENPKQLNKNILQIENEFYSPIRPKRNAKNGETPTDALLRAGIEYVEIRALDVNPFSEVGIDIEQFHFLDVFLTYCLLKSSPAMDWEEQTRSTENLDTVVNKGREKGLELNYFNQPRTLQSWGEDIFSQLSEVAKYMDTAYGVSYYSSTIERMATWINNPGLTYSGRYVAELEASGLDNGHYALAIAEKYKQSHQAADYQVFSKQWLEEQVTRSNDAQRAIEQSDSVSFTAFLNAYFDPK</sequence>
<dbReference type="EC" id="6.3.2.2" evidence="1"/>
<dbReference type="EMBL" id="CR954246">
    <property type="protein sequence ID" value="CAI86016.1"/>
    <property type="molecule type" value="Genomic_DNA"/>
</dbReference>
<dbReference type="SMR" id="Q3IEB7"/>
<dbReference type="STRING" id="326442.PSHAa0937"/>
<dbReference type="KEGG" id="pha:PSHAa0937"/>
<dbReference type="PATRIC" id="fig|326442.8.peg.898"/>
<dbReference type="eggNOG" id="COG2918">
    <property type="taxonomic scope" value="Bacteria"/>
</dbReference>
<dbReference type="HOGENOM" id="CLU_020728_3_0_6"/>
<dbReference type="BioCyc" id="PHAL326442:PSHA_RS04575-MONOMER"/>
<dbReference type="BRENDA" id="6.3.2.2">
    <property type="organism ID" value="5081"/>
</dbReference>
<dbReference type="UniPathway" id="UPA00142">
    <property type="reaction ID" value="UER00209"/>
</dbReference>
<dbReference type="Proteomes" id="UP000006843">
    <property type="component" value="Chromosome I"/>
</dbReference>
<dbReference type="GO" id="GO:0005829">
    <property type="term" value="C:cytosol"/>
    <property type="evidence" value="ECO:0007669"/>
    <property type="project" value="TreeGrafter"/>
</dbReference>
<dbReference type="GO" id="GO:0005524">
    <property type="term" value="F:ATP binding"/>
    <property type="evidence" value="ECO:0007669"/>
    <property type="project" value="UniProtKB-KW"/>
</dbReference>
<dbReference type="GO" id="GO:0004357">
    <property type="term" value="F:glutamate-cysteine ligase activity"/>
    <property type="evidence" value="ECO:0007669"/>
    <property type="project" value="UniProtKB-UniRule"/>
</dbReference>
<dbReference type="GO" id="GO:0046872">
    <property type="term" value="F:metal ion binding"/>
    <property type="evidence" value="ECO:0007669"/>
    <property type="project" value="TreeGrafter"/>
</dbReference>
<dbReference type="GO" id="GO:0006750">
    <property type="term" value="P:glutathione biosynthetic process"/>
    <property type="evidence" value="ECO:0007669"/>
    <property type="project" value="UniProtKB-UniRule"/>
</dbReference>
<dbReference type="Gene3D" id="3.30.590.20">
    <property type="match status" value="1"/>
</dbReference>
<dbReference type="HAMAP" id="MF_00578">
    <property type="entry name" value="Glu_cys_ligase"/>
    <property type="match status" value="1"/>
</dbReference>
<dbReference type="InterPro" id="IPR014746">
    <property type="entry name" value="Gln_synth/guanido_kin_cat_dom"/>
</dbReference>
<dbReference type="InterPro" id="IPR007370">
    <property type="entry name" value="Glu_cys_ligase"/>
</dbReference>
<dbReference type="InterPro" id="IPR006334">
    <property type="entry name" value="Glut_cys_ligase"/>
</dbReference>
<dbReference type="NCBIfam" id="TIGR01434">
    <property type="entry name" value="glu_cys_ligase"/>
    <property type="match status" value="1"/>
</dbReference>
<dbReference type="PANTHER" id="PTHR38761">
    <property type="entry name" value="GLUTAMATE--CYSTEINE LIGASE"/>
    <property type="match status" value="1"/>
</dbReference>
<dbReference type="PANTHER" id="PTHR38761:SF1">
    <property type="entry name" value="GLUTAMATE--CYSTEINE LIGASE"/>
    <property type="match status" value="1"/>
</dbReference>
<dbReference type="Pfam" id="PF04262">
    <property type="entry name" value="Glu_cys_ligase"/>
    <property type="match status" value="1"/>
</dbReference>
<dbReference type="SUPFAM" id="SSF55931">
    <property type="entry name" value="Glutamine synthetase/guanido kinase"/>
    <property type="match status" value="1"/>
</dbReference>
<protein>
    <recommendedName>
        <fullName evidence="1">Glutamate--cysteine ligase</fullName>
        <ecNumber evidence="1">6.3.2.2</ecNumber>
    </recommendedName>
    <alternativeName>
        <fullName evidence="1">Gamma-ECS</fullName>
        <shortName evidence="1">GCS</shortName>
    </alternativeName>
    <alternativeName>
        <fullName evidence="1">Gamma-glutamylcysteine synthetase</fullName>
    </alternativeName>
</protein>
<comment type="catalytic activity">
    <reaction evidence="1">
        <text>L-cysteine + L-glutamate + ATP = gamma-L-glutamyl-L-cysteine + ADP + phosphate + H(+)</text>
        <dbReference type="Rhea" id="RHEA:13285"/>
        <dbReference type="ChEBI" id="CHEBI:15378"/>
        <dbReference type="ChEBI" id="CHEBI:29985"/>
        <dbReference type="ChEBI" id="CHEBI:30616"/>
        <dbReference type="ChEBI" id="CHEBI:35235"/>
        <dbReference type="ChEBI" id="CHEBI:43474"/>
        <dbReference type="ChEBI" id="CHEBI:58173"/>
        <dbReference type="ChEBI" id="CHEBI:456216"/>
        <dbReference type="EC" id="6.3.2.2"/>
    </reaction>
</comment>
<comment type="pathway">
    <text evidence="1">Sulfur metabolism; glutathione biosynthesis; glutathione from L-cysteine and L-glutamate: step 1/2.</text>
</comment>
<comment type="similarity">
    <text evidence="1">Belongs to the glutamate--cysteine ligase type 1 family. Type 1 subfamily.</text>
</comment>
<organism>
    <name type="scientific">Pseudoalteromonas translucida (strain TAC 125)</name>
    <dbReference type="NCBI Taxonomy" id="326442"/>
    <lineage>
        <taxon>Bacteria</taxon>
        <taxon>Pseudomonadati</taxon>
        <taxon>Pseudomonadota</taxon>
        <taxon>Gammaproteobacteria</taxon>
        <taxon>Alteromonadales</taxon>
        <taxon>Pseudoalteromonadaceae</taxon>
        <taxon>Pseudoalteromonas</taxon>
    </lineage>
</organism>
<keyword id="KW-0067">ATP-binding</keyword>
<keyword id="KW-0317">Glutathione biosynthesis</keyword>
<keyword id="KW-0436">Ligase</keyword>
<keyword id="KW-0547">Nucleotide-binding</keyword>
<keyword id="KW-1185">Reference proteome</keyword>
<reference key="1">
    <citation type="journal article" date="2005" name="Genome Res.">
        <title>Coping with cold: the genome of the versatile marine Antarctica bacterium Pseudoalteromonas haloplanktis TAC125.</title>
        <authorList>
            <person name="Medigue C."/>
            <person name="Krin E."/>
            <person name="Pascal G."/>
            <person name="Barbe V."/>
            <person name="Bernsel A."/>
            <person name="Bertin P.N."/>
            <person name="Cheung F."/>
            <person name="Cruveiller S."/>
            <person name="D'Amico S."/>
            <person name="Duilio A."/>
            <person name="Fang G."/>
            <person name="Feller G."/>
            <person name="Ho C."/>
            <person name="Mangenot S."/>
            <person name="Marino G."/>
            <person name="Nilsson J."/>
            <person name="Parrilli E."/>
            <person name="Rocha E.P.C."/>
            <person name="Rouy Z."/>
            <person name="Sekowska A."/>
            <person name="Tutino M.L."/>
            <person name="Vallenet D."/>
            <person name="von Heijne G."/>
            <person name="Danchin A."/>
        </authorList>
    </citation>
    <scope>NUCLEOTIDE SEQUENCE [LARGE SCALE GENOMIC DNA]</scope>
    <source>
        <strain>TAC 125</strain>
    </source>
</reference>
<evidence type="ECO:0000255" key="1">
    <source>
        <dbReference type="HAMAP-Rule" id="MF_00578"/>
    </source>
</evidence>
<gene>
    <name evidence="1" type="primary">gshA</name>
    <name type="ordered locus">PSHAa0937</name>
</gene>